<comment type="function">
    <text evidence="6">Catalyzes the phosphorylation of D-fructose 6-phosphate to fructose 1,6-bisphosphate by ATP, the first committing step of glycolysis.</text>
</comment>
<comment type="catalytic activity">
    <reaction evidence="6">
        <text>beta-D-fructose 6-phosphate + ATP = beta-D-fructose 1,6-bisphosphate + ADP + H(+)</text>
        <dbReference type="Rhea" id="RHEA:16109"/>
        <dbReference type="ChEBI" id="CHEBI:15378"/>
        <dbReference type="ChEBI" id="CHEBI:30616"/>
        <dbReference type="ChEBI" id="CHEBI:32966"/>
        <dbReference type="ChEBI" id="CHEBI:57634"/>
        <dbReference type="ChEBI" id="CHEBI:456216"/>
        <dbReference type="EC" id="2.7.1.11"/>
    </reaction>
</comment>
<comment type="cofactor">
    <cofactor evidence="6">
        <name>Mg(2+)</name>
        <dbReference type="ChEBI" id="CHEBI:18420"/>
    </cofactor>
</comment>
<comment type="activity regulation">
    <text evidence="6">Allosterically activated by ADP, AMP, or fructose 2,6-bisphosphate, and allosterically inhibited by ATP or citrate.</text>
</comment>
<comment type="pathway">
    <text evidence="6">Carbohydrate degradation; glycolysis; D-glyceraldehyde 3-phosphate and glycerone phosphate from D-glucose: step 3/4.</text>
</comment>
<comment type="subunit">
    <text evidence="4 6 7">Homo- and heterotetramers (By similarity). Phosphofructokinase (PFK) enzyme functions as a tetramer composed of different combinations of 3 types of subunits, called PFKM (M), PFKL (L) and PFKP (P). The composition of the PFK tetramer differs according to the tissue type it is present in. The kinetic and regulatory properties of the tetrameric enzyme are dependent on the subunit composition, hence can vary across tissues (Probable). Interacts (via C-terminus) with HK1 (via N-terminal spermatogenic cell-specific region) (By similarity).</text>
</comment>
<comment type="subcellular location">
    <subcellularLocation>
        <location evidence="6">Cytoplasm</location>
    </subcellularLocation>
</comment>
<comment type="PTM">
    <text evidence="1">GlcNAcylation decreases enzyme activity.</text>
</comment>
<comment type="similarity">
    <text evidence="6">Belongs to the phosphofructokinase type A (PFKA) family. ATP-dependent PFK group I subfamily. Eukaryotic two domain clade 'E' sub-subfamily.</text>
</comment>
<name>PFKAM_HORSE</name>
<reference key="1">
    <citation type="submission" date="2003-02" db="EMBL/GenBank/DDBJ databases">
        <title>Molecular cloning of cDNA encoding equine muscle-type phosphofructokinase.</title>
        <authorList>
            <person name="Sato T."/>
            <person name="Ito T."/>
            <person name="Sakai T."/>
        </authorList>
    </citation>
    <scope>NUCLEOTIDE SEQUENCE [MRNA]</scope>
    <source>
        <tissue>Skeletal muscle</tissue>
    </source>
</reference>
<protein>
    <recommendedName>
        <fullName evidence="6">ATP-dependent 6-phosphofructokinase, muscle type</fullName>
        <shortName evidence="6">ATP-PFK</shortName>
        <shortName>PFK-M</shortName>
        <ecNumber evidence="6">2.7.1.11</ecNumber>
    </recommendedName>
    <alternativeName>
        <fullName>6-phosphofructokinase type A</fullName>
    </alternativeName>
    <alternativeName>
        <fullName>Phosphofructo-1-kinase isozyme A</fullName>
        <shortName>PFK-A</shortName>
    </alternativeName>
    <alternativeName>
        <fullName evidence="6">Phosphohexokinase</fullName>
    </alternativeName>
</protein>
<dbReference type="EC" id="2.7.1.11" evidence="6"/>
<dbReference type="EMBL" id="AB088683">
    <property type="protein sequence ID" value="BAC57529.1"/>
    <property type="molecule type" value="mRNA"/>
</dbReference>
<dbReference type="RefSeq" id="NP_001075391.1">
    <property type="nucleotide sequence ID" value="NM_001081922.2"/>
</dbReference>
<dbReference type="SMR" id="Q867C9"/>
<dbReference type="FunCoup" id="Q867C9">
    <property type="interactions" value="1302"/>
</dbReference>
<dbReference type="STRING" id="9796.ENSECAP00000023635"/>
<dbReference type="GlyCosmos" id="Q867C9">
    <property type="glycosylation" value="1 site, No reported glycans"/>
</dbReference>
<dbReference type="PaxDb" id="9796-ENSECAP00000023635"/>
<dbReference type="GeneID" id="100034116"/>
<dbReference type="KEGG" id="ecb:100034116"/>
<dbReference type="CTD" id="5213"/>
<dbReference type="InParanoid" id="Q867C9"/>
<dbReference type="OrthoDB" id="537915at2759"/>
<dbReference type="UniPathway" id="UPA00109">
    <property type="reaction ID" value="UER00182"/>
</dbReference>
<dbReference type="Proteomes" id="UP000002281">
    <property type="component" value="Unplaced"/>
</dbReference>
<dbReference type="GO" id="GO:0005945">
    <property type="term" value="C:6-phosphofructokinase complex"/>
    <property type="evidence" value="ECO:0000318"/>
    <property type="project" value="GO_Central"/>
</dbReference>
<dbReference type="GO" id="GO:0016020">
    <property type="term" value="C:membrane"/>
    <property type="evidence" value="ECO:0000318"/>
    <property type="project" value="GO_Central"/>
</dbReference>
<dbReference type="GO" id="GO:0003872">
    <property type="term" value="F:6-phosphofructokinase activity"/>
    <property type="evidence" value="ECO:0000250"/>
    <property type="project" value="UniProtKB"/>
</dbReference>
<dbReference type="GO" id="GO:0005524">
    <property type="term" value="F:ATP binding"/>
    <property type="evidence" value="ECO:0007669"/>
    <property type="project" value="UniProtKB-KW"/>
</dbReference>
<dbReference type="GO" id="GO:0070095">
    <property type="term" value="F:fructose-6-phosphate binding"/>
    <property type="evidence" value="ECO:0000318"/>
    <property type="project" value="GO_Central"/>
</dbReference>
<dbReference type="GO" id="GO:0046872">
    <property type="term" value="F:metal ion binding"/>
    <property type="evidence" value="ECO:0007669"/>
    <property type="project" value="UniProtKB-KW"/>
</dbReference>
<dbReference type="GO" id="GO:0061621">
    <property type="term" value="P:canonical glycolysis"/>
    <property type="evidence" value="ECO:0000318"/>
    <property type="project" value="GO_Central"/>
</dbReference>
<dbReference type="GO" id="GO:0030388">
    <property type="term" value="P:fructose 1,6-bisphosphate metabolic process"/>
    <property type="evidence" value="ECO:0000318"/>
    <property type="project" value="GO_Central"/>
</dbReference>
<dbReference type="GO" id="GO:0006002">
    <property type="term" value="P:fructose 6-phosphate metabolic process"/>
    <property type="evidence" value="ECO:0000318"/>
    <property type="project" value="GO_Central"/>
</dbReference>
<dbReference type="CDD" id="cd00764">
    <property type="entry name" value="Eukaryotic_PFK"/>
    <property type="match status" value="1"/>
</dbReference>
<dbReference type="FunFam" id="3.40.50.460:FF:000001">
    <property type="entry name" value="ATP-dependent 6-phosphofructokinase"/>
    <property type="match status" value="1"/>
</dbReference>
<dbReference type="FunFam" id="3.40.50.460:FF:000003">
    <property type="entry name" value="ATP-dependent 6-phosphofructokinase"/>
    <property type="match status" value="1"/>
</dbReference>
<dbReference type="FunFam" id="3.40.50.450:FF:000043">
    <property type="entry name" value="ATP-dependent 6-phosphofructokinase, platelet type"/>
    <property type="match status" value="1"/>
</dbReference>
<dbReference type="Gene3D" id="3.40.50.450">
    <property type="match status" value="2"/>
</dbReference>
<dbReference type="Gene3D" id="3.40.50.460">
    <property type="entry name" value="Phosphofructokinase domain"/>
    <property type="match status" value="2"/>
</dbReference>
<dbReference type="HAMAP" id="MF_03184">
    <property type="entry name" value="Phosphofructokinase_I_E"/>
    <property type="match status" value="1"/>
</dbReference>
<dbReference type="InterPro" id="IPR009161">
    <property type="entry name" value="6-Pfructokinase_euk"/>
</dbReference>
<dbReference type="InterPro" id="IPR022953">
    <property type="entry name" value="ATP_PFK"/>
</dbReference>
<dbReference type="InterPro" id="IPR041914">
    <property type="entry name" value="PFK_vert-type"/>
</dbReference>
<dbReference type="InterPro" id="IPR015912">
    <property type="entry name" value="Phosphofructokinase_CS"/>
</dbReference>
<dbReference type="InterPro" id="IPR000023">
    <property type="entry name" value="Phosphofructokinase_dom"/>
</dbReference>
<dbReference type="InterPro" id="IPR035966">
    <property type="entry name" value="PKF_sf"/>
</dbReference>
<dbReference type="NCBIfam" id="TIGR02478">
    <property type="entry name" value="6PF1K_euk"/>
    <property type="match status" value="1"/>
</dbReference>
<dbReference type="PANTHER" id="PTHR13697:SF59">
    <property type="entry name" value="ATP-DEPENDENT 6-PHOSPHOFRUCTOKINASE, MUSCLE TYPE"/>
    <property type="match status" value="1"/>
</dbReference>
<dbReference type="PANTHER" id="PTHR13697">
    <property type="entry name" value="PHOSPHOFRUCTOKINASE"/>
    <property type="match status" value="1"/>
</dbReference>
<dbReference type="Pfam" id="PF00365">
    <property type="entry name" value="PFK"/>
    <property type="match status" value="2"/>
</dbReference>
<dbReference type="PIRSF" id="PIRSF000533">
    <property type="entry name" value="ATP_PFK_euk"/>
    <property type="match status" value="1"/>
</dbReference>
<dbReference type="PRINTS" id="PR00476">
    <property type="entry name" value="PHFRCTKINASE"/>
</dbReference>
<dbReference type="SUPFAM" id="SSF53784">
    <property type="entry name" value="Phosphofructokinase"/>
    <property type="match status" value="2"/>
</dbReference>
<dbReference type="PROSITE" id="PS00433">
    <property type="entry name" value="PHOSPHOFRUCTOKINASE"/>
    <property type="match status" value="2"/>
</dbReference>
<gene>
    <name type="primary">PFKM</name>
</gene>
<evidence type="ECO:0000250" key="1"/>
<evidence type="ECO:0000250" key="2">
    <source>
        <dbReference type="UniProtKB" id="P00511"/>
    </source>
</evidence>
<evidence type="ECO:0000250" key="3">
    <source>
        <dbReference type="UniProtKB" id="P08237"/>
    </source>
</evidence>
<evidence type="ECO:0000250" key="4">
    <source>
        <dbReference type="UniProtKB" id="P47857"/>
    </source>
</evidence>
<evidence type="ECO:0000250" key="5">
    <source>
        <dbReference type="UniProtKB" id="P47858"/>
    </source>
</evidence>
<evidence type="ECO:0000255" key="6">
    <source>
        <dbReference type="HAMAP-Rule" id="MF_03184"/>
    </source>
</evidence>
<evidence type="ECO:0000305" key="7"/>
<sequence length="780" mass="85282">MTHEEHHAAKTLGIGKAIAVLTSGGDAQGMNAAVRAVVRVGIFTGARVFFVHEGYQGLVDGGDHIREATWESVSMMLQLGGTVIGSARCKDFREREGRLRAAHNLVKLGITNLCVIGGDGSLTGADTFRSEWSDLLSDLQKAGKITAEEATKSNYLNIVGLVGSIDNDFCGTDMTIGTDSALHRIIEIVDAITTTAQSHQRTFVLEVMGRHCGYLALVTSLSCGADWVFIPECPPDDDWEDHLCRRLSETRTRGSRLNIIIVAEGAIDRNGKPITSESIKDLVVKRLGYDTRVTVLGHVQRGGTPSAFDRILGSRMGVEAVMALLEATPDTPACVVSLSGNQAVRLPLMECVQVTKDVTKAMAERKFDEAMKLRGRSFMNNWEVYKLLAHIRPPVSKSGSHTVAVMNVGAPAAGMNAAVRSTVRIGLIQGNRVLVVHDGFEGLAKGRIEEAGWSYVGGWTGQGGSKLGTKRTLPRKSFEQISANITKFNIQGLIIVGGFEAYTGGLELMEGRKQYDELCIPFVVIPATVSNNVPGSDFSVGADTALNTICMTCDRIKQSAAGTKRRVFIIETMGGYCGYLATMAGLAAGADAAYIFEEPFTIRDLQVNVEHLVQKMKTTVKRGLVLRNEKCNENYSTDFIFNLYSEEGKGIFDSRKNVLGHMQQGGSPTPFDRNFATKMGAKAMNWMSGKIKESYRNGRIFANTPDSGCVLGMRKRALVFQPVTELKEQTDFEHRIPKEQWWLKLRPILKILAKYEIDLDTSEHAHLEHISRKRSGEAPA</sequence>
<accession>Q867C9</accession>
<keyword id="KW-0007">Acetylation</keyword>
<keyword id="KW-0021">Allosteric enzyme</keyword>
<keyword id="KW-0067">ATP-binding</keyword>
<keyword id="KW-0963">Cytoplasm</keyword>
<keyword id="KW-0324">Glycolysis</keyword>
<keyword id="KW-0325">Glycoprotein</keyword>
<keyword id="KW-0379">Hydroxylation</keyword>
<keyword id="KW-0418">Kinase</keyword>
<keyword id="KW-0460">Magnesium</keyword>
<keyword id="KW-0479">Metal-binding</keyword>
<keyword id="KW-0547">Nucleotide-binding</keyword>
<keyword id="KW-0597">Phosphoprotein</keyword>
<keyword id="KW-1185">Reference proteome</keyword>
<keyword id="KW-0808">Transferase</keyword>
<proteinExistence type="evidence at transcript level"/>
<feature type="initiator methionine" description="Removed" evidence="2">
    <location>
        <position position="1"/>
    </location>
</feature>
<feature type="chain" id="PRO_0000112015" description="ATP-dependent 6-phosphofructokinase, muscle type">
    <location>
        <begin position="2"/>
        <end position="780"/>
    </location>
</feature>
<feature type="region of interest" description="N-terminal catalytic PFK domain 1">
    <location>
        <begin position="2"/>
        <end position="390"/>
    </location>
</feature>
<feature type="region of interest" description="Interdomain linker">
    <location>
        <begin position="391"/>
        <end position="401"/>
    </location>
</feature>
<feature type="region of interest" description="C-terminal regulatory PFK domain 2">
    <location>
        <begin position="402"/>
        <end position="780"/>
    </location>
</feature>
<feature type="active site" description="Proton acceptor" evidence="6">
    <location>
        <position position="166"/>
    </location>
</feature>
<feature type="binding site" evidence="6">
    <location>
        <position position="25"/>
    </location>
    <ligand>
        <name>ATP</name>
        <dbReference type="ChEBI" id="CHEBI:30616"/>
    </ligand>
</feature>
<feature type="binding site" evidence="6">
    <location>
        <begin position="88"/>
        <end position="89"/>
    </location>
    <ligand>
        <name>ATP</name>
        <dbReference type="ChEBI" id="CHEBI:30616"/>
    </ligand>
</feature>
<feature type="binding site" evidence="6">
    <location>
        <begin position="118"/>
        <end position="121"/>
    </location>
    <ligand>
        <name>ATP</name>
        <dbReference type="ChEBI" id="CHEBI:30616"/>
    </ligand>
</feature>
<feature type="binding site" evidence="6">
    <location>
        <position position="119"/>
    </location>
    <ligand>
        <name>Mg(2+)</name>
        <dbReference type="ChEBI" id="CHEBI:18420"/>
        <note>catalytic</note>
    </ligand>
</feature>
<feature type="binding site" description="in other chain" evidence="6">
    <location>
        <begin position="164"/>
        <end position="166"/>
    </location>
    <ligand>
        <name>substrate</name>
        <note>ligand shared between dimeric partners</note>
    </ligand>
</feature>
<feature type="binding site" evidence="6">
    <location>
        <position position="201"/>
    </location>
    <ligand>
        <name>substrate</name>
        <note>ligand shared between dimeric partners</note>
    </ligand>
</feature>
<feature type="binding site" description="in other chain" evidence="6">
    <location>
        <begin position="208"/>
        <end position="210"/>
    </location>
    <ligand>
        <name>substrate</name>
        <note>ligand shared between dimeric partners</note>
    </ligand>
</feature>
<feature type="binding site" description="in other chain" evidence="6">
    <location>
        <position position="264"/>
    </location>
    <ligand>
        <name>substrate</name>
        <note>ligand shared between dimeric partners</note>
    </ligand>
</feature>
<feature type="binding site" evidence="6">
    <location>
        <position position="292"/>
    </location>
    <ligand>
        <name>substrate</name>
        <note>ligand shared between dimeric partners</note>
    </ligand>
</feature>
<feature type="binding site" description="in other chain" evidence="6">
    <location>
        <begin position="298"/>
        <end position="301"/>
    </location>
    <ligand>
        <name>substrate</name>
        <note>ligand shared between dimeric partners</note>
    </ligand>
</feature>
<feature type="binding site" description="in other chain" evidence="6">
    <location>
        <position position="471"/>
    </location>
    <ligand>
        <name>beta-D-fructose 2,6-bisphosphate</name>
        <dbReference type="ChEBI" id="CHEBI:58579"/>
        <note>allosteric activator; ligand shared between dimeric partners</note>
    </ligand>
</feature>
<feature type="binding site" description="in other chain" evidence="6">
    <location>
        <begin position="528"/>
        <end position="532"/>
    </location>
    <ligand>
        <name>beta-D-fructose 2,6-bisphosphate</name>
        <dbReference type="ChEBI" id="CHEBI:58579"/>
        <note>allosteric activator; ligand shared between dimeric partners</note>
    </ligand>
</feature>
<feature type="binding site" evidence="6">
    <location>
        <position position="566"/>
    </location>
    <ligand>
        <name>beta-D-fructose 2,6-bisphosphate</name>
        <dbReference type="ChEBI" id="CHEBI:58579"/>
        <note>allosteric activator; ligand shared between dimeric partners</note>
    </ligand>
</feature>
<feature type="binding site" description="in other chain" evidence="6">
    <location>
        <begin position="573"/>
        <end position="575"/>
    </location>
    <ligand>
        <name>beta-D-fructose 2,6-bisphosphate</name>
        <dbReference type="ChEBI" id="CHEBI:58579"/>
        <note>allosteric activator; ligand shared between dimeric partners</note>
    </ligand>
</feature>
<feature type="binding site" description="in other chain" evidence="6">
    <location>
        <position position="629"/>
    </location>
    <ligand>
        <name>beta-D-fructose 2,6-bisphosphate</name>
        <dbReference type="ChEBI" id="CHEBI:58579"/>
        <note>allosteric activator; ligand shared between dimeric partners</note>
    </ligand>
</feature>
<feature type="binding site" evidence="6">
    <location>
        <position position="655"/>
    </location>
    <ligand>
        <name>beta-D-fructose 2,6-bisphosphate</name>
        <dbReference type="ChEBI" id="CHEBI:58579"/>
        <note>allosteric activator; ligand shared between dimeric partners</note>
    </ligand>
</feature>
<feature type="binding site" description="in other chain" evidence="6">
    <location>
        <begin position="661"/>
        <end position="664"/>
    </location>
    <ligand>
        <name>beta-D-fructose 2,6-bisphosphate</name>
        <dbReference type="ChEBI" id="CHEBI:58579"/>
        <note>allosteric activator; ligand shared between dimeric partners</note>
    </ligand>
</feature>
<feature type="binding site" description="in other chain" evidence="6">
    <location>
        <position position="735"/>
    </location>
    <ligand>
        <name>beta-D-fructose 2,6-bisphosphate</name>
        <dbReference type="ChEBI" id="CHEBI:58579"/>
        <note>allosteric activator; ligand shared between dimeric partners</note>
    </ligand>
</feature>
<feature type="modified residue" description="N-acetylthreonine" evidence="2">
    <location>
        <position position="2"/>
    </location>
</feature>
<feature type="modified residue" description="Phosphoserine" evidence="5">
    <location>
        <position position="133"/>
    </location>
</feature>
<feature type="modified residue" description="Phosphoserine" evidence="4">
    <location>
        <position position="377"/>
    </location>
</feature>
<feature type="modified residue" description="N6-(2-hydroxyisobutyryl)lysine" evidence="3">
    <location>
        <position position="557"/>
    </location>
</feature>
<feature type="modified residue" description="Phosphoserine" evidence="3">
    <location>
        <position position="667"/>
    </location>
</feature>
<feature type="modified residue" description="Phosphoserine" evidence="2">
    <location>
        <position position="775"/>
    </location>
</feature>
<feature type="glycosylation site" description="O-linked (GlcNAc) serine" evidence="1">
    <location>
        <position position="530"/>
    </location>
</feature>
<organism>
    <name type="scientific">Equus caballus</name>
    <name type="common">Horse</name>
    <dbReference type="NCBI Taxonomy" id="9796"/>
    <lineage>
        <taxon>Eukaryota</taxon>
        <taxon>Metazoa</taxon>
        <taxon>Chordata</taxon>
        <taxon>Craniata</taxon>
        <taxon>Vertebrata</taxon>
        <taxon>Euteleostomi</taxon>
        <taxon>Mammalia</taxon>
        <taxon>Eutheria</taxon>
        <taxon>Laurasiatheria</taxon>
        <taxon>Perissodactyla</taxon>
        <taxon>Equidae</taxon>
        <taxon>Equus</taxon>
    </lineage>
</organism>